<keyword id="KW-0007">Acetylation</keyword>
<keyword id="KW-0249">Electron transport</keyword>
<keyword id="KW-0472">Membrane</keyword>
<keyword id="KW-0496">Mitochondrion</keyword>
<keyword id="KW-0999">Mitochondrion inner membrane</keyword>
<keyword id="KW-1185">Reference proteome</keyword>
<keyword id="KW-0679">Respiratory chain</keyword>
<keyword id="KW-0812">Transmembrane</keyword>
<keyword id="KW-1133">Transmembrane helix</keyword>
<keyword id="KW-0813">Transport</keyword>
<protein>
    <recommendedName>
        <fullName>NADH dehydrogenase [ubiquinone] 1 beta subcomplex subunit 6</fullName>
    </recommendedName>
    <alternativeName>
        <fullName>Complex I-B17</fullName>
        <shortName>CI-B17</shortName>
    </alternativeName>
    <alternativeName>
        <fullName>NADH-ubiquinone oxidoreductase B17 subunit</fullName>
    </alternativeName>
</protein>
<gene>
    <name type="primary">NDUFB6</name>
</gene>
<comment type="function">
    <text evidence="1">Accessory subunit of the mitochondrial membrane respiratory chain NADH dehydrogenase (Complex I), that is believed not to be involved in catalysis. Complex I functions in the transfer of electrons from NADH to the respiratory chain. The immediate electron acceptor for the enzyme is believed to be ubiquinone.</text>
</comment>
<comment type="subunit">
    <text evidence="1">Complex I is composed of 45 different subunits.</text>
</comment>
<comment type="subcellular location">
    <subcellularLocation>
        <location evidence="1">Mitochondrion inner membrane</location>
        <topology evidence="3">Single-pass membrane protein</topology>
        <orientation evidence="1">Matrix side</orientation>
    </subcellularLocation>
</comment>
<comment type="similarity">
    <text evidence="4">Belongs to the complex I NDUFB6 subunit family.</text>
</comment>
<feature type="initiator methionine" description="Removed" evidence="1">
    <location>
        <position position="1"/>
    </location>
</feature>
<feature type="chain" id="PRO_0000251837" description="NADH dehydrogenase [ubiquinone] 1 beta subcomplex subunit 6">
    <location>
        <begin position="2"/>
        <end position="128"/>
    </location>
</feature>
<feature type="transmembrane region" description="Helical" evidence="3">
    <location>
        <begin position="68"/>
        <end position="86"/>
    </location>
</feature>
<feature type="modified residue" description="N-acetylthreonine" evidence="1">
    <location>
        <position position="2"/>
    </location>
</feature>
<feature type="modified residue" description="N6-acetyllysine" evidence="2">
    <location>
        <position position="24"/>
    </location>
</feature>
<organism>
    <name type="scientific">Pan troglodytes</name>
    <name type="common">Chimpanzee</name>
    <dbReference type="NCBI Taxonomy" id="9598"/>
    <lineage>
        <taxon>Eukaryota</taxon>
        <taxon>Metazoa</taxon>
        <taxon>Chordata</taxon>
        <taxon>Craniata</taxon>
        <taxon>Vertebrata</taxon>
        <taxon>Euteleostomi</taxon>
        <taxon>Mammalia</taxon>
        <taxon>Eutheria</taxon>
        <taxon>Euarchontoglires</taxon>
        <taxon>Primates</taxon>
        <taxon>Haplorrhini</taxon>
        <taxon>Catarrhini</taxon>
        <taxon>Hominidae</taxon>
        <taxon>Pan</taxon>
    </lineage>
</organism>
<accession>Q0MQE1</accession>
<reference key="1">
    <citation type="journal article" date="2006" name="Gene">
        <title>Adaptive selection of mitochondrial complex I subunits during primate radiation.</title>
        <authorList>
            <person name="Mishmar D."/>
            <person name="Ruiz-Pesini E."/>
            <person name="Mondragon-Palomino M."/>
            <person name="Procaccio V."/>
            <person name="Gaut B."/>
            <person name="Wallace D.C."/>
        </authorList>
    </citation>
    <scope>NUCLEOTIDE SEQUENCE [MRNA]</scope>
</reference>
<evidence type="ECO:0000250" key="1">
    <source>
        <dbReference type="UniProtKB" id="O95139"/>
    </source>
</evidence>
<evidence type="ECO:0000250" key="2">
    <source>
        <dbReference type="UniProtKB" id="Q3UIU2"/>
    </source>
</evidence>
<evidence type="ECO:0000255" key="3"/>
<evidence type="ECO:0000305" key="4"/>
<dbReference type="EMBL" id="DQ885693">
    <property type="protein sequence ID" value="ABH12202.1"/>
    <property type="molecule type" value="mRNA"/>
</dbReference>
<dbReference type="RefSeq" id="NP_001233137.1">
    <property type="nucleotide sequence ID" value="NM_001246208.1"/>
</dbReference>
<dbReference type="SMR" id="Q0MQE1"/>
<dbReference type="FunCoup" id="Q0MQE1">
    <property type="interactions" value="1001"/>
</dbReference>
<dbReference type="STRING" id="9598.ENSPTRP00000091097"/>
<dbReference type="PaxDb" id="9598-ENSPTRP00000035649"/>
<dbReference type="Ensembl" id="ENSPTRT00000080811.1">
    <property type="protein sequence ID" value="ENSPTRP00000091097.1"/>
    <property type="gene ID" value="ENSPTRG00000020846.4"/>
</dbReference>
<dbReference type="GeneID" id="100611615"/>
<dbReference type="KEGG" id="ptr:100611615"/>
<dbReference type="CTD" id="4712"/>
<dbReference type="VGNC" id="VGNC:4800">
    <property type="gene designation" value="NDUFB6"/>
</dbReference>
<dbReference type="eggNOG" id="KOG4633">
    <property type="taxonomic scope" value="Eukaryota"/>
</dbReference>
<dbReference type="GeneTree" id="ENSGT00390000007535"/>
<dbReference type="HOGENOM" id="CLU_171928_0_0_1"/>
<dbReference type="InParanoid" id="Q0MQE1"/>
<dbReference type="OMA" id="KYHVNTK"/>
<dbReference type="OrthoDB" id="10717at9604"/>
<dbReference type="TreeFam" id="TF328587"/>
<dbReference type="Proteomes" id="UP000002277">
    <property type="component" value="Chromosome 9"/>
</dbReference>
<dbReference type="Bgee" id="ENSPTRG00000020846">
    <property type="expression patterns" value="Expressed in heart and 21 other cell types or tissues"/>
</dbReference>
<dbReference type="GO" id="GO:0005743">
    <property type="term" value="C:mitochondrial inner membrane"/>
    <property type="evidence" value="ECO:0007669"/>
    <property type="project" value="UniProtKB-SubCell"/>
</dbReference>
<dbReference type="GO" id="GO:0005654">
    <property type="term" value="C:nucleoplasm"/>
    <property type="evidence" value="ECO:0007669"/>
    <property type="project" value="Ensembl"/>
</dbReference>
<dbReference type="GO" id="GO:0045271">
    <property type="term" value="C:respiratory chain complex I"/>
    <property type="evidence" value="ECO:0000250"/>
    <property type="project" value="UniProtKB"/>
</dbReference>
<dbReference type="GO" id="GO:0042775">
    <property type="term" value="P:mitochondrial ATP synthesis coupled electron transport"/>
    <property type="evidence" value="ECO:0000318"/>
    <property type="project" value="GO_Central"/>
</dbReference>
<dbReference type="GO" id="GO:0006120">
    <property type="term" value="P:mitochondrial electron transport, NADH to ubiquinone"/>
    <property type="evidence" value="ECO:0007669"/>
    <property type="project" value="InterPro"/>
</dbReference>
<dbReference type="InterPro" id="IPR019174">
    <property type="entry name" value="NADH_DH_b-subcmplx_su6"/>
</dbReference>
<dbReference type="PANTHER" id="PTHR15083">
    <property type="entry name" value="NADH DEHYDROGENASE [UBIQUINONE] 1 BETA SUBCOMPLEX SUBUNIT 6"/>
    <property type="match status" value="1"/>
</dbReference>
<dbReference type="PANTHER" id="PTHR15083:SF0">
    <property type="entry name" value="NADH DEHYDROGENASE [UBIQUINONE] 1 BETA SUBCOMPLEX SUBUNIT 6"/>
    <property type="match status" value="1"/>
</dbReference>
<dbReference type="Pfam" id="PF09782">
    <property type="entry name" value="NDUF_B6"/>
    <property type="match status" value="1"/>
</dbReference>
<proteinExistence type="evidence at transcript level"/>
<sequence length="128" mass="15489">MTGYTPDEKLRLQQLRELRRRWLKDQELSPREPVLPPQKMGPMEKFWNKFLENKSPWRKMVHGVYKKSIFVFTHVLVPVWIIHYYMKYHVSEKPYGIVEKKSRIFPGDTILETGEVIPPMKEFPDQHH</sequence>
<name>NDUB6_PANTR</name>